<protein>
    <recommendedName>
        <fullName evidence="1">Riboflavin biosynthesis protein RibBA</fullName>
    </recommendedName>
    <domain>
        <recommendedName>
            <fullName evidence="1">3,4-dihydroxy-2-butanone 4-phosphate synthase</fullName>
            <shortName evidence="1">DHBP synthase</shortName>
            <ecNumber evidence="1">4.1.99.12</ecNumber>
        </recommendedName>
    </domain>
    <domain>
        <recommendedName>
            <fullName evidence="1">GTP cyclohydrolase-2</fullName>
            <ecNumber evidence="1">3.5.4.25</ecNumber>
        </recommendedName>
        <alternativeName>
            <fullName evidence="1">GTP cyclohydrolase II</fullName>
        </alternativeName>
    </domain>
</protein>
<keyword id="KW-0342">GTP-binding</keyword>
<keyword id="KW-0378">Hydrolase</keyword>
<keyword id="KW-0456">Lyase</keyword>
<keyword id="KW-0460">Magnesium</keyword>
<keyword id="KW-0464">Manganese</keyword>
<keyword id="KW-0479">Metal-binding</keyword>
<keyword id="KW-0511">Multifunctional enzyme</keyword>
<keyword id="KW-0547">Nucleotide-binding</keyword>
<keyword id="KW-0686">Riboflavin biosynthesis</keyword>
<keyword id="KW-0862">Zinc</keyword>
<gene>
    <name evidence="1" type="primary">ribBA</name>
    <name type="ordered locus">Paes_0583</name>
</gene>
<organism>
    <name type="scientific">Prosthecochloris aestuarii (strain DSM 271 / SK 413)</name>
    <dbReference type="NCBI Taxonomy" id="290512"/>
    <lineage>
        <taxon>Bacteria</taxon>
        <taxon>Pseudomonadati</taxon>
        <taxon>Chlorobiota</taxon>
        <taxon>Chlorobiia</taxon>
        <taxon>Chlorobiales</taxon>
        <taxon>Chlorobiaceae</taxon>
        <taxon>Prosthecochloris</taxon>
    </lineage>
</organism>
<evidence type="ECO:0000255" key="1">
    <source>
        <dbReference type="HAMAP-Rule" id="MF_01283"/>
    </source>
</evidence>
<comment type="function">
    <text evidence="1">Catalyzes the conversion of D-ribulose 5-phosphate to formate and 3,4-dihydroxy-2-butanone 4-phosphate.</text>
</comment>
<comment type="function">
    <text evidence="1">Catalyzes the conversion of GTP to 2,5-diamino-6-ribosylamino-4(3H)-pyrimidinone 5'-phosphate (DARP), formate and pyrophosphate.</text>
</comment>
<comment type="catalytic activity">
    <reaction evidence="1">
        <text>D-ribulose 5-phosphate = (2S)-2-hydroxy-3-oxobutyl phosphate + formate + H(+)</text>
        <dbReference type="Rhea" id="RHEA:18457"/>
        <dbReference type="ChEBI" id="CHEBI:15378"/>
        <dbReference type="ChEBI" id="CHEBI:15740"/>
        <dbReference type="ChEBI" id="CHEBI:58121"/>
        <dbReference type="ChEBI" id="CHEBI:58830"/>
        <dbReference type="EC" id="4.1.99.12"/>
    </reaction>
</comment>
<comment type="catalytic activity">
    <reaction evidence="1">
        <text>GTP + 4 H2O = 2,5-diamino-6-hydroxy-4-(5-phosphoribosylamino)-pyrimidine + formate + 2 phosphate + 3 H(+)</text>
        <dbReference type="Rhea" id="RHEA:23704"/>
        <dbReference type="ChEBI" id="CHEBI:15377"/>
        <dbReference type="ChEBI" id="CHEBI:15378"/>
        <dbReference type="ChEBI" id="CHEBI:15740"/>
        <dbReference type="ChEBI" id="CHEBI:37565"/>
        <dbReference type="ChEBI" id="CHEBI:43474"/>
        <dbReference type="ChEBI" id="CHEBI:58614"/>
        <dbReference type="EC" id="3.5.4.25"/>
    </reaction>
</comment>
<comment type="cofactor">
    <cofactor evidence="1">
        <name>Mg(2+)</name>
        <dbReference type="ChEBI" id="CHEBI:18420"/>
    </cofactor>
    <cofactor evidence="1">
        <name>Mn(2+)</name>
        <dbReference type="ChEBI" id="CHEBI:29035"/>
    </cofactor>
    <text evidence="1">Binds 2 divalent metal cations per subunit. Magnesium or manganese.</text>
</comment>
<comment type="cofactor">
    <cofactor evidence="1">
        <name>Zn(2+)</name>
        <dbReference type="ChEBI" id="CHEBI:29105"/>
    </cofactor>
    <text evidence="1">Binds 1 zinc ion per subunit.</text>
</comment>
<comment type="pathway">
    <text evidence="1">Cofactor biosynthesis; riboflavin biosynthesis; 2-hydroxy-3-oxobutyl phosphate from D-ribulose 5-phosphate: step 1/1.</text>
</comment>
<comment type="pathway">
    <text evidence="1">Cofactor biosynthesis; riboflavin biosynthesis; 5-amino-6-(D-ribitylamino)uracil from GTP: step 1/4.</text>
</comment>
<comment type="similarity">
    <text evidence="1">In the N-terminal section; belongs to the DHBP synthase family.</text>
</comment>
<comment type="similarity">
    <text evidence="1">In the C-terminal section; belongs to the GTP cyclohydrolase II family.</text>
</comment>
<reference key="1">
    <citation type="submission" date="2008-06" db="EMBL/GenBank/DDBJ databases">
        <title>Complete sequence of chromosome of Prosthecochloris aestuarii DSM 271.</title>
        <authorList>
            <consortium name="US DOE Joint Genome Institute"/>
            <person name="Lucas S."/>
            <person name="Copeland A."/>
            <person name="Lapidus A."/>
            <person name="Glavina del Rio T."/>
            <person name="Dalin E."/>
            <person name="Tice H."/>
            <person name="Bruce D."/>
            <person name="Goodwin L."/>
            <person name="Pitluck S."/>
            <person name="Schmutz J."/>
            <person name="Larimer F."/>
            <person name="Land M."/>
            <person name="Hauser L."/>
            <person name="Kyrpides N."/>
            <person name="Anderson I."/>
            <person name="Liu Z."/>
            <person name="Li T."/>
            <person name="Zhao F."/>
            <person name="Overmann J."/>
            <person name="Bryant D.A."/>
            <person name="Richardson P."/>
        </authorList>
    </citation>
    <scope>NUCLEOTIDE SEQUENCE [LARGE SCALE GENOMIC DNA]</scope>
    <source>
        <strain>DSM 271 / SK 413</strain>
    </source>
</reference>
<name>RIBBA_PROA2</name>
<feature type="chain" id="PRO_1000165258" description="Riboflavin biosynthesis protein RibBA">
    <location>
        <begin position="1"/>
        <end position="421"/>
    </location>
</feature>
<feature type="region of interest" description="DHBP synthase">
    <location>
        <begin position="1"/>
        <end position="205"/>
    </location>
</feature>
<feature type="region of interest" description="GTP cyclohydrolase II">
    <location>
        <begin position="206"/>
        <end position="421"/>
    </location>
</feature>
<feature type="active site" description="Proton acceptor; for GTP cyclohydrolase activity" evidence="1">
    <location>
        <position position="335"/>
    </location>
</feature>
<feature type="active site" description="Nucleophile; for GTP cyclohydrolase activity" evidence="1">
    <location>
        <position position="337"/>
    </location>
</feature>
<feature type="binding site" evidence="1">
    <location>
        <begin position="30"/>
        <end position="31"/>
    </location>
    <ligand>
        <name>D-ribulose 5-phosphate</name>
        <dbReference type="ChEBI" id="CHEBI:58121"/>
    </ligand>
</feature>
<feature type="binding site" evidence="1">
    <location>
        <position position="31"/>
    </location>
    <ligand>
        <name>Mg(2+)</name>
        <dbReference type="ChEBI" id="CHEBI:18420"/>
        <label>1</label>
    </ligand>
</feature>
<feature type="binding site" evidence="1">
    <location>
        <position position="31"/>
    </location>
    <ligand>
        <name>Mg(2+)</name>
        <dbReference type="ChEBI" id="CHEBI:18420"/>
        <label>2</label>
    </ligand>
</feature>
<feature type="binding site" evidence="1">
    <location>
        <position position="35"/>
    </location>
    <ligand>
        <name>D-ribulose 5-phosphate</name>
        <dbReference type="ChEBI" id="CHEBI:58121"/>
    </ligand>
</feature>
<feature type="binding site" evidence="1">
    <location>
        <begin position="144"/>
        <end position="148"/>
    </location>
    <ligand>
        <name>D-ribulose 5-phosphate</name>
        <dbReference type="ChEBI" id="CHEBI:58121"/>
    </ligand>
</feature>
<feature type="binding site" evidence="1">
    <location>
        <position position="147"/>
    </location>
    <ligand>
        <name>Mg(2+)</name>
        <dbReference type="ChEBI" id="CHEBI:18420"/>
        <label>2</label>
    </ligand>
</feature>
<feature type="binding site" evidence="1">
    <location>
        <position position="168"/>
    </location>
    <ligand>
        <name>D-ribulose 5-phosphate</name>
        <dbReference type="ChEBI" id="CHEBI:58121"/>
    </ligand>
</feature>
<feature type="binding site" evidence="1">
    <location>
        <begin position="258"/>
        <end position="262"/>
    </location>
    <ligand>
        <name>GTP</name>
        <dbReference type="ChEBI" id="CHEBI:37565"/>
    </ligand>
</feature>
<feature type="binding site" evidence="1">
    <location>
        <position position="263"/>
    </location>
    <ligand>
        <name>Zn(2+)</name>
        <dbReference type="ChEBI" id="CHEBI:29105"/>
        <note>catalytic</note>
    </ligand>
</feature>
<feature type="binding site" evidence="1">
    <location>
        <position position="274"/>
    </location>
    <ligand>
        <name>Zn(2+)</name>
        <dbReference type="ChEBI" id="CHEBI:29105"/>
        <note>catalytic</note>
    </ligand>
</feature>
<feature type="binding site" evidence="1">
    <location>
        <position position="276"/>
    </location>
    <ligand>
        <name>Zn(2+)</name>
        <dbReference type="ChEBI" id="CHEBI:29105"/>
        <note>catalytic</note>
    </ligand>
</feature>
<feature type="binding site" evidence="1">
    <location>
        <position position="279"/>
    </location>
    <ligand>
        <name>GTP</name>
        <dbReference type="ChEBI" id="CHEBI:37565"/>
    </ligand>
</feature>
<feature type="binding site" evidence="1">
    <location>
        <begin position="301"/>
        <end position="303"/>
    </location>
    <ligand>
        <name>GTP</name>
        <dbReference type="ChEBI" id="CHEBI:37565"/>
    </ligand>
</feature>
<feature type="binding site" evidence="1">
    <location>
        <position position="323"/>
    </location>
    <ligand>
        <name>GTP</name>
        <dbReference type="ChEBI" id="CHEBI:37565"/>
    </ligand>
</feature>
<feature type="binding site" evidence="1">
    <location>
        <position position="358"/>
    </location>
    <ligand>
        <name>GTP</name>
        <dbReference type="ChEBI" id="CHEBI:37565"/>
    </ligand>
</feature>
<feature type="binding site" evidence="1">
    <location>
        <position position="363"/>
    </location>
    <ligand>
        <name>GTP</name>
        <dbReference type="ChEBI" id="CHEBI:37565"/>
    </ligand>
</feature>
<feature type="site" description="Essential for DHBP synthase activity" evidence="1">
    <location>
        <position position="130"/>
    </location>
</feature>
<feature type="site" description="Essential for DHBP synthase activity" evidence="1">
    <location>
        <position position="168"/>
    </location>
</feature>
<dbReference type="EC" id="4.1.99.12" evidence="1"/>
<dbReference type="EC" id="3.5.4.25" evidence="1"/>
<dbReference type="EMBL" id="CP001108">
    <property type="protein sequence ID" value="ACF45639.1"/>
    <property type="molecule type" value="Genomic_DNA"/>
</dbReference>
<dbReference type="RefSeq" id="WP_012505176.1">
    <property type="nucleotide sequence ID" value="NC_011059.1"/>
</dbReference>
<dbReference type="SMR" id="B4S5Y8"/>
<dbReference type="STRING" id="290512.Paes_0583"/>
<dbReference type="KEGG" id="paa:Paes_0583"/>
<dbReference type="eggNOG" id="COG0108">
    <property type="taxonomic scope" value="Bacteria"/>
</dbReference>
<dbReference type="eggNOG" id="COG0807">
    <property type="taxonomic scope" value="Bacteria"/>
</dbReference>
<dbReference type="HOGENOM" id="CLU_020273_1_2_10"/>
<dbReference type="UniPathway" id="UPA00275">
    <property type="reaction ID" value="UER00399"/>
</dbReference>
<dbReference type="UniPathway" id="UPA00275">
    <property type="reaction ID" value="UER00400"/>
</dbReference>
<dbReference type="Proteomes" id="UP000002725">
    <property type="component" value="Chromosome"/>
</dbReference>
<dbReference type="GO" id="GO:0005829">
    <property type="term" value="C:cytosol"/>
    <property type="evidence" value="ECO:0007669"/>
    <property type="project" value="TreeGrafter"/>
</dbReference>
<dbReference type="GO" id="GO:0008686">
    <property type="term" value="F:3,4-dihydroxy-2-butanone-4-phosphate synthase activity"/>
    <property type="evidence" value="ECO:0007669"/>
    <property type="project" value="UniProtKB-UniRule"/>
</dbReference>
<dbReference type="GO" id="GO:0005525">
    <property type="term" value="F:GTP binding"/>
    <property type="evidence" value="ECO:0007669"/>
    <property type="project" value="UniProtKB-KW"/>
</dbReference>
<dbReference type="GO" id="GO:0003935">
    <property type="term" value="F:GTP cyclohydrolase II activity"/>
    <property type="evidence" value="ECO:0007669"/>
    <property type="project" value="UniProtKB-UniRule"/>
</dbReference>
<dbReference type="GO" id="GO:0000287">
    <property type="term" value="F:magnesium ion binding"/>
    <property type="evidence" value="ECO:0007669"/>
    <property type="project" value="UniProtKB-UniRule"/>
</dbReference>
<dbReference type="GO" id="GO:0030145">
    <property type="term" value="F:manganese ion binding"/>
    <property type="evidence" value="ECO:0007669"/>
    <property type="project" value="UniProtKB-UniRule"/>
</dbReference>
<dbReference type="GO" id="GO:0008270">
    <property type="term" value="F:zinc ion binding"/>
    <property type="evidence" value="ECO:0007669"/>
    <property type="project" value="UniProtKB-UniRule"/>
</dbReference>
<dbReference type="GO" id="GO:0009231">
    <property type="term" value="P:riboflavin biosynthetic process"/>
    <property type="evidence" value="ECO:0007669"/>
    <property type="project" value="UniProtKB-UniRule"/>
</dbReference>
<dbReference type="CDD" id="cd00641">
    <property type="entry name" value="GTP_cyclohydro2"/>
    <property type="match status" value="1"/>
</dbReference>
<dbReference type="FunFam" id="3.40.50.10990:FF:000001">
    <property type="entry name" value="Riboflavin biosynthesis protein RibBA"/>
    <property type="match status" value="1"/>
</dbReference>
<dbReference type="FunFam" id="3.90.870.10:FF:000001">
    <property type="entry name" value="Riboflavin biosynthesis protein RibBA"/>
    <property type="match status" value="1"/>
</dbReference>
<dbReference type="Gene3D" id="3.90.870.10">
    <property type="entry name" value="DHBP synthase"/>
    <property type="match status" value="1"/>
</dbReference>
<dbReference type="Gene3D" id="3.40.50.10990">
    <property type="entry name" value="GTP cyclohydrolase II"/>
    <property type="match status" value="1"/>
</dbReference>
<dbReference type="HAMAP" id="MF_00179">
    <property type="entry name" value="RibA"/>
    <property type="match status" value="1"/>
</dbReference>
<dbReference type="HAMAP" id="MF_00180">
    <property type="entry name" value="RibB"/>
    <property type="match status" value="1"/>
</dbReference>
<dbReference type="HAMAP" id="MF_01283">
    <property type="entry name" value="RibBA"/>
    <property type="match status" value="1"/>
</dbReference>
<dbReference type="InterPro" id="IPR017945">
    <property type="entry name" value="DHBP_synth_RibB-like_a/b_dom"/>
</dbReference>
<dbReference type="InterPro" id="IPR000422">
    <property type="entry name" value="DHBP_synthase_RibB"/>
</dbReference>
<dbReference type="InterPro" id="IPR032677">
    <property type="entry name" value="GTP_cyclohydro_II"/>
</dbReference>
<dbReference type="InterPro" id="IPR000926">
    <property type="entry name" value="RibA"/>
</dbReference>
<dbReference type="InterPro" id="IPR036144">
    <property type="entry name" value="RibA-like_sf"/>
</dbReference>
<dbReference type="InterPro" id="IPR016299">
    <property type="entry name" value="Riboflavin_synth_RibBA"/>
</dbReference>
<dbReference type="NCBIfam" id="NF001591">
    <property type="entry name" value="PRK00393.1"/>
    <property type="match status" value="1"/>
</dbReference>
<dbReference type="NCBIfam" id="NF006803">
    <property type="entry name" value="PRK09311.1"/>
    <property type="match status" value="1"/>
</dbReference>
<dbReference type="NCBIfam" id="TIGR00505">
    <property type="entry name" value="ribA"/>
    <property type="match status" value="1"/>
</dbReference>
<dbReference type="NCBIfam" id="TIGR00506">
    <property type="entry name" value="ribB"/>
    <property type="match status" value="1"/>
</dbReference>
<dbReference type="PANTHER" id="PTHR21327:SF18">
    <property type="entry name" value="3,4-DIHYDROXY-2-BUTANONE 4-PHOSPHATE SYNTHASE"/>
    <property type="match status" value="1"/>
</dbReference>
<dbReference type="PANTHER" id="PTHR21327">
    <property type="entry name" value="GTP CYCLOHYDROLASE II-RELATED"/>
    <property type="match status" value="1"/>
</dbReference>
<dbReference type="Pfam" id="PF00926">
    <property type="entry name" value="DHBP_synthase"/>
    <property type="match status" value="1"/>
</dbReference>
<dbReference type="Pfam" id="PF00925">
    <property type="entry name" value="GTP_cyclohydro2"/>
    <property type="match status" value="1"/>
</dbReference>
<dbReference type="PIRSF" id="PIRSF001259">
    <property type="entry name" value="RibA"/>
    <property type="match status" value="1"/>
</dbReference>
<dbReference type="SUPFAM" id="SSF142695">
    <property type="entry name" value="RibA-like"/>
    <property type="match status" value="1"/>
</dbReference>
<dbReference type="SUPFAM" id="SSF55821">
    <property type="entry name" value="YrdC/RibB"/>
    <property type="match status" value="1"/>
</dbReference>
<proteinExistence type="inferred from homology"/>
<sequence length="421" mass="46499">MSEKKIDSIESAIEDLKNGKLIIVIDDEDREDEGDFIAAADKVTPEMVNFITKEARGLLCVAVTMDRAKELQLDPMVQRNTSQHETNFTVSVDALAEGVTTGISAFDRYMTIKMLADPVSHADNFSRPGHIFPLRAMDGGVLRRVGHTEAAVDLAELAGSTPVGLLCEILHDDGSMARLPELLKIKEKFDLKLITIKDLVAYQMKRKKLVARAVETSLPTRHGDFRLIAYEACCDSQQQNHLAFVKGDFSTDEPVLVRVHSQCATGDIFASLRCDCGNQLASAMQQIEKAGKGVLIYLMQEGRGIGLINKLKAYNLQDQGFDTVEANEQLGFKADLRDYGIGAQILQDLGVKKMRLLTNNPKKIVGLEGYGLEIVERVPIEIAPNSVNLSYLETKRDKMGHMINCSCNCSGVSQQDNHTQQ</sequence>
<accession>B4S5Y8</accession>